<feature type="chain" id="PRO_0000333785" description="Nickel/cobalt efflux system RcnA">
    <location>
        <begin position="1"/>
        <end position="274"/>
    </location>
</feature>
<feature type="topological domain" description="Periplasmic" evidence="2">
    <location>
        <begin position="1"/>
        <end position="12"/>
    </location>
</feature>
<feature type="transmembrane region" description="Helical" evidence="2">
    <location>
        <begin position="13"/>
        <end position="33"/>
    </location>
</feature>
<feature type="topological domain" description="Cytoplasmic" evidence="2">
    <location>
        <begin position="34"/>
        <end position="56"/>
    </location>
</feature>
<feature type="transmembrane region" description="Helical" evidence="2">
    <location>
        <begin position="57"/>
        <end position="77"/>
    </location>
</feature>
<feature type="topological domain" description="Periplasmic" evidence="2">
    <location>
        <begin position="78"/>
        <end position="86"/>
    </location>
</feature>
<feature type="transmembrane region" description="Helical" evidence="2">
    <location>
        <begin position="87"/>
        <end position="107"/>
    </location>
</feature>
<feature type="topological domain" description="Cytoplasmic" evidence="2">
    <location>
        <begin position="108"/>
        <end position="174"/>
    </location>
</feature>
<feature type="transmembrane region" description="Helical" evidence="2">
    <location>
        <begin position="175"/>
        <end position="195"/>
    </location>
</feature>
<feature type="topological domain" description="Periplasmic" evidence="2">
    <location>
        <begin position="196"/>
        <end position="209"/>
    </location>
</feature>
<feature type="transmembrane region" description="Helical" evidence="2">
    <location>
        <begin position="210"/>
        <end position="230"/>
    </location>
</feature>
<feature type="topological domain" description="Cytoplasmic" evidence="2">
    <location>
        <begin position="231"/>
        <end position="251"/>
    </location>
</feature>
<feature type="transmembrane region" description="Helical" evidence="2">
    <location>
        <begin position="252"/>
        <end position="272"/>
    </location>
</feature>
<feature type="topological domain" description="Periplasmic" evidence="2">
    <location>
        <begin position="273"/>
        <end position="274"/>
    </location>
</feature>
<feature type="region of interest" description="Disordered" evidence="3">
    <location>
        <begin position="127"/>
        <end position="153"/>
    </location>
</feature>
<feature type="compositionally biased region" description="Basic and acidic residues" evidence="3">
    <location>
        <begin position="127"/>
        <end position="137"/>
    </location>
</feature>
<gene>
    <name type="primary">rcnA</name>
    <name type="ordered locus">ECP_2144</name>
</gene>
<dbReference type="EMBL" id="CP000247">
    <property type="protein sequence ID" value="ABG70143.1"/>
    <property type="molecule type" value="Genomic_DNA"/>
</dbReference>
<dbReference type="RefSeq" id="WP_000134615.1">
    <property type="nucleotide sequence ID" value="NC_008253.1"/>
</dbReference>
<dbReference type="KEGG" id="ecp:ECP_2144"/>
<dbReference type="HOGENOM" id="CLU_058605_2_0_6"/>
<dbReference type="Proteomes" id="UP000009182">
    <property type="component" value="Chromosome"/>
</dbReference>
<dbReference type="GO" id="GO:0005886">
    <property type="term" value="C:plasma membrane"/>
    <property type="evidence" value="ECO:0007669"/>
    <property type="project" value="UniProtKB-SubCell"/>
</dbReference>
<dbReference type="GO" id="GO:0046583">
    <property type="term" value="F:monoatomic cation efflux transmembrane transporter activity"/>
    <property type="evidence" value="ECO:0007669"/>
    <property type="project" value="TreeGrafter"/>
</dbReference>
<dbReference type="GO" id="GO:0015099">
    <property type="term" value="F:nickel cation transmembrane transporter activity"/>
    <property type="evidence" value="ECO:0007669"/>
    <property type="project" value="InterPro"/>
</dbReference>
<dbReference type="GO" id="GO:0006824">
    <property type="term" value="P:cobalt ion transport"/>
    <property type="evidence" value="ECO:0007669"/>
    <property type="project" value="UniProtKB-KW"/>
</dbReference>
<dbReference type="GO" id="GO:0032025">
    <property type="term" value="P:response to cobalt ion"/>
    <property type="evidence" value="ECO:0007669"/>
    <property type="project" value="TreeGrafter"/>
</dbReference>
<dbReference type="GO" id="GO:0010045">
    <property type="term" value="P:response to nickel cation"/>
    <property type="evidence" value="ECO:0007669"/>
    <property type="project" value="TreeGrafter"/>
</dbReference>
<dbReference type="InterPro" id="IPR011541">
    <property type="entry name" value="Ni/Co_transpt_high_affinity"/>
</dbReference>
<dbReference type="InterPro" id="IPR051224">
    <property type="entry name" value="NiCoT_RcnA"/>
</dbReference>
<dbReference type="NCBIfam" id="NF007454">
    <property type="entry name" value="PRK10019.1"/>
    <property type="match status" value="1"/>
</dbReference>
<dbReference type="PANTHER" id="PTHR40659">
    <property type="entry name" value="NICKEL/COBALT EFFLUX SYSTEM RCNA"/>
    <property type="match status" value="1"/>
</dbReference>
<dbReference type="PANTHER" id="PTHR40659:SF1">
    <property type="entry name" value="NICKEL_COBALT EFFLUX SYSTEM RCNA"/>
    <property type="match status" value="1"/>
</dbReference>
<dbReference type="Pfam" id="PF03824">
    <property type="entry name" value="NicO"/>
    <property type="match status" value="1"/>
</dbReference>
<protein>
    <recommendedName>
        <fullName>Nickel/cobalt efflux system RcnA</fullName>
    </recommendedName>
</protein>
<evidence type="ECO:0000250" key="1"/>
<evidence type="ECO:0000255" key="2"/>
<evidence type="ECO:0000256" key="3">
    <source>
        <dbReference type="SAM" id="MobiDB-lite"/>
    </source>
</evidence>
<evidence type="ECO:0000305" key="4"/>
<comment type="function">
    <text evidence="1">Efflux system for nickel and cobalt.</text>
</comment>
<comment type="subcellular location">
    <subcellularLocation>
        <location evidence="1">Cell inner membrane</location>
        <topology evidence="1">Multi-pass membrane protein</topology>
    </subcellularLocation>
</comment>
<comment type="induction">
    <text evidence="1">By nickel and cobalt. Transcriptionally repressed by RcnR (By similarity).</text>
</comment>
<comment type="similarity">
    <text evidence="4">Belongs to the NiCoT transporter (TC 2.A.52) family. RcnA subfamily.</text>
</comment>
<accession>Q0TFY6</accession>
<organism>
    <name type="scientific">Escherichia coli O6:K15:H31 (strain 536 / UPEC)</name>
    <dbReference type="NCBI Taxonomy" id="362663"/>
    <lineage>
        <taxon>Bacteria</taxon>
        <taxon>Pseudomonadati</taxon>
        <taxon>Pseudomonadota</taxon>
        <taxon>Gammaproteobacteria</taxon>
        <taxon>Enterobacterales</taxon>
        <taxon>Enterobacteriaceae</taxon>
        <taxon>Escherichia</taxon>
    </lineage>
</organism>
<keyword id="KW-0997">Cell inner membrane</keyword>
<keyword id="KW-1003">Cell membrane</keyword>
<keyword id="KW-0170">Cobalt</keyword>
<keyword id="KW-0171">Cobalt transport</keyword>
<keyword id="KW-0406">Ion transport</keyword>
<keyword id="KW-0472">Membrane</keyword>
<keyword id="KW-0533">Nickel</keyword>
<keyword id="KW-0921">Nickel transport</keyword>
<keyword id="KW-0812">Transmembrane</keyword>
<keyword id="KW-1133">Transmembrane helix</keyword>
<keyword id="KW-0813">Transport</keyword>
<proteinExistence type="inferred from homology"/>
<sequence length="274" mass="30473">MTEFTTLLQQGNAWFFIPSAILLGALHGLEPGHSKTMMAAFIIAIKGTIKQAVMLGLAATISHTAVVWLIAFGGMVISKRFTAQSAEPWLQLISAVIIISTAFWMFWRTWRGERNWLENMHEHDHEHHHHDHEDHHDHGHHHHHEHGEYQDAHARAHANDIKRRFDGREVTNWQILLFGLTGGLIPCPAAITVLLICIQLKALTLGATLVVSFSLGLALTLVTVSVGAAISVQQVAKRWSGFNTLAKRAPYFSSLLIGLVGVYMGVHGFMGIMR</sequence>
<name>RCNA_ECOL5</name>
<reference key="1">
    <citation type="journal article" date="2006" name="Mol. Microbiol.">
        <title>Role of pathogenicity island-associated integrases in the genome plasticity of uropathogenic Escherichia coli strain 536.</title>
        <authorList>
            <person name="Hochhut B."/>
            <person name="Wilde C."/>
            <person name="Balling G."/>
            <person name="Middendorf B."/>
            <person name="Dobrindt U."/>
            <person name="Brzuszkiewicz E."/>
            <person name="Gottschalk G."/>
            <person name="Carniel E."/>
            <person name="Hacker J."/>
        </authorList>
    </citation>
    <scope>NUCLEOTIDE SEQUENCE [LARGE SCALE GENOMIC DNA]</scope>
    <source>
        <strain>536 / UPEC</strain>
    </source>
</reference>